<comment type="function">
    <text evidence="1">Essential cell division protein. May link together the upstream cell division proteins, which are predominantly cytoplasmic, with the downstream cell division proteins, which are predominantly periplasmic. May control correct divisome assembly.</text>
</comment>
<comment type="subunit">
    <text evidence="1">Part of a complex composed of FtsB, FtsL and FtsQ.</text>
</comment>
<comment type="subcellular location">
    <subcellularLocation>
        <location evidence="1">Cell inner membrane</location>
        <topology evidence="1">Single-pass type II membrane protein</topology>
    </subcellularLocation>
    <text evidence="1">Localizes to the division septum.</text>
</comment>
<comment type="similarity">
    <text evidence="1">Belongs to the FtsQ/DivIB family. FtsQ subfamily.</text>
</comment>
<reference key="1">
    <citation type="journal article" date="2011" name="Stand. Genomic Sci.">
        <title>Complete genome sequence of Allochromatium vinosum DSM 180(T).</title>
        <authorList>
            <person name="Weissgerber T."/>
            <person name="Zigann R."/>
            <person name="Bruce D."/>
            <person name="Chang Y.J."/>
            <person name="Detter J.C."/>
            <person name="Han C."/>
            <person name="Hauser L."/>
            <person name="Jeffries C.D."/>
            <person name="Land M."/>
            <person name="Munk A.C."/>
            <person name="Tapia R."/>
            <person name="Dahl C."/>
        </authorList>
    </citation>
    <scope>NUCLEOTIDE SEQUENCE [LARGE SCALE GENOMIC DNA]</scope>
    <source>
        <strain>ATCC 17899 / DSM 180 / NBRC 103801 / NCIMB 10441 / D</strain>
    </source>
</reference>
<feature type="chain" id="PRO_0000414657" description="Cell division protein FtsQ">
    <location>
        <begin position="1"/>
        <end position="248"/>
    </location>
</feature>
<feature type="topological domain" description="Cytoplasmic" evidence="1">
    <location>
        <begin position="1"/>
        <end position="4"/>
    </location>
</feature>
<feature type="transmembrane region" description="Helical" evidence="1">
    <location>
        <begin position="5"/>
        <end position="25"/>
    </location>
</feature>
<feature type="topological domain" description="Periplasmic" evidence="1">
    <location>
        <begin position="26"/>
        <end position="248"/>
    </location>
</feature>
<feature type="domain" description="POTRA" evidence="2">
    <location>
        <begin position="32"/>
        <end position="101"/>
    </location>
</feature>
<gene>
    <name evidence="1" type="primary">ftsQ</name>
    <name type="ordered locus">Alvin_0137</name>
</gene>
<accession>D3RVH9</accession>
<organism>
    <name type="scientific">Allochromatium vinosum (strain ATCC 17899 / DSM 180 / NBRC 103801 / NCIMB 10441 / D)</name>
    <name type="common">Chromatium vinosum</name>
    <dbReference type="NCBI Taxonomy" id="572477"/>
    <lineage>
        <taxon>Bacteria</taxon>
        <taxon>Pseudomonadati</taxon>
        <taxon>Pseudomonadota</taxon>
        <taxon>Gammaproteobacteria</taxon>
        <taxon>Chromatiales</taxon>
        <taxon>Chromatiaceae</taxon>
        <taxon>Allochromatium</taxon>
    </lineage>
</organism>
<keyword id="KW-0131">Cell cycle</keyword>
<keyword id="KW-0132">Cell division</keyword>
<keyword id="KW-0997">Cell inner membrane</keyword>
<keyword id="KW-1003">Cell membrane</keyword>
<keyword id="KW-0472">Membrane</keyword>
<keyword id="KW-1185">Reference proteome</keyword>
<keyword id="KW-0812">Transmembrane</keyword>
<keyword id="KW-1133">Transmembrane helix</keyword>
<name>FTSQ_ALLVD</name>
<evidence type="ECO:0000255" key="1">
    <source>
        <dbReference type="HAMAP-Rule" id="MF_00911"/>
    </source>
</evidence>
<evidence type="ECO:0000255" key="2">
    <source>
        <dbReference type="PROSITE-ProRule" id="PRU01115"/>
    </source>
</evidence>
<dbReference type="EMBL" id="CP001896">
    <property type="protein sequence ID" value="ADC61106.1"/>
    <property type="molecule type" value="Genomic_DNA"/>
</dbReference>
<dbReference type="SMR" id="D3RVH9"/>
<dbReference type="STRING" id="572477.Alvin_0137"/>
<dbReference type="KEGG" id="alv:Alvin_0137"/>
<dbReference type="eggNOG" id="COG1589">
    <property type="taxonomic scope" value="Bacteria"/>
</dbReference>
<dbReference type="HOGENOM" id="CLU_064041_1_1_6"/>
<dbReference type="OrthoDB" id="9790370at2"/>
<dbReference type="Proteomes" id="UP000001441">
    <property type="component" value="Chromosome"/>
</dbReference>
<dbReference type="GO" id="GO:0032153">
    <property type="term" value="C:cell division site"/>
    <property type="evidence" value="ECO:0007669"/>
    <property type="project" value="UniProtKB-UniRule"/>
</dbReference>
<dbReference type="GO" id="GO:0005886">
    <property type="term" value="C:plasma membrane"/>
    <property type="evidence" value="ECO:0007669"/>
    <property type="project" value="UniProtKB-SubCell"/>
</dbReference>
<dbReference type="GO" id="GO:0004435">
    <property type="term" value="F:phosphatidylinositol-4,5-bisphosphate phospholipase C activity"/>
    <property type="evidence" value="ECO:0007669"/>
    <property type="project" value="InterPro"/>
</dbReference>
<dbReference type="GO" id="GO:0090529">
    <property type="term" value="P:cell septum assembly"/>
    <property type="evidence" value="ECO:0007669"/>
    <property type="project" value="InterPro"/>
</dbReference>
<dbReference type="GO" id="GO:0043093">
    <property type="term" value="P:FtsZ-dependent cytokinesis"/>
    <property type="evidence" value="ECO:0007669"/>
    <property type="project" value="UniProtKB-UniRule"/>
</dbReference>
<dbReference type="GO" id="GO:0035556">
    <property type="term" value="P:intracellular signal transduction"/>
    <property type="evidence" value="ECO:0007669"/>
    <property type="project" value="InterPro"/>
</dbReference>
<dbReference type="GO" id="GO:0006629">
    <property type="term" value="P:lipid metabolic process"/>
    <property type="evidence" value="ECO:0007669"/>
    <property type="project" value="InterPro"/>
</dbReference>
<dbReference type="Gene3D" id="3.40.50.11690">
    <property type="entry name" value="Cell division protein FtsQ/DivIB"/>
    <property type="match status" value="1"/>
</dbReference>
<dbReference type="Gene3D" id="3.10.20.310">
    <property type="entry name" value="membrane protein fhac"/>
    <property type="match status" value="1"/>
</dbReference>
<dbReference type="HAMAP" id="MF_00911">
    <property type="entry name" value="FtsQ_subfam"/>
    <property type="match status" value="1"/>
</dbReference>
<dbReference type="InterPro" id="IPR005548">
    <property type="entry name" value="Cell_div_FtsQ/DivIB_C"/>
</dbReference>
<dbReference type="InterPro" id="IPR026579">
    <property type="entry name" value="FtsQ"/>
</dbReference>
<dbReference type="InterPro" id="IPR045335">
    <property type="entry name" value="FtsQ_C_sf"/>
</dbReference>
<dbReference type="InterPro" id="IPR001711">
    <property type="entry name" value="PLipase_C_Pinositol-sp_Y"/>
</dbReference>
<dbReference type="InterPro" id="IPR034746">
    <property type="entry name" value="POTRA"/>
</dbReference>
<dbReference type="InterPro" id="IPR013685">
    <property type="entry name" value="POTRA_FtsQ_type"/>
</dbReference>
<dbReference type="PANTHER" id="PTHR35851">
    <property type="entry name" value="CELL DIVISION PROTEIN FTSQ"/>
    <property type="match status" value="1"/>
</dbReference>
<dbReference type="PANTHER" id="PTHR35851:SF1">
    <property type="entry name" value="CELL DIVISION PROTEIN FTSQ"/>
    <property type="match status" value="1"/>
</dbReference>
<dbReference type="Pfam" id="PF03799">
    <property type="entry name" value="FtsQ_DivIB_C"/>
    <property type="match status" value="1"/>
</dbReference>
<dbReference type="Pfam" id="PF08478">
    <property type="entry name" value="POTRA_1"/>
    <property type="match status" value="1"/>
</dbReference>
<dbReference type="PROSITE" id="PS51779">
    <property type="entry name" value="POTRA"/>
    <property type="match status" value="1"/>
</dbReference>
<protein>
    <recommendedName>
        <fullName evidence="1">Cell division protein FtsQ</fullName>
    </recommendedName>
</protein>
<sequence>MGTRLRALLGVLILLVLGGAGWLFLRWEPTLLPIRLIQIEGEVHHHSSQQLQERLTERLHGGILTADLVDLKQTAEELPWVGQATLRRVWPDTLRVQVREYRPIARWSLDGLVTADGIVFRPQGGSIPSNLPLLEGDDKRAPEITARYQAWQAALERVGRGIQRLSVDPRGDWRLKLASGAELRLGTTMVEERLARYLASASQLEAAGRPLTVDLRYSNGFSVKWAPNTDTGVRAHPDRVAARAGNRR</sequence>
<proteinExistence type="inferred from homology"/>